<organism>
    <name type="scientific">Syntrophomonas wolfei subsp. wolfei (strain DSM 2245B / Goettingen)</name>
    <dbReference type="NCBI Taxonomy" id="335541"/>
    <lineage>
        <taxon>Bacteria</taxon>
        <taxon>Bacillati</taxon>
        <taxon>Bacillota</taxon>
        <taxon>Clostridia</taxon>
        <taxon>Eubacteriales</taxon>
        <taxon>Syntrophomonadaceae</taxon>
        <taxon>Syntrophomonas</taxon>
    </lineage>
</organism>
<dbReference type="EMBL" id="CP000448">
    <property type="protein sequence ID" value="ABI68020.1"/>
    <property type="molecule type" value="Genomic_DNA"/>
</dbReference>
<dbReference type="SMR" id="Q0AZ34"/>
<dbReference type="STRING" id="335541.Swol_0696"/>
<dbReference type="KEGG" id="swo:Swol_0696"/>
<dbReference type="eggNOG" id="COG2086">
    <property type="taxonomic scope" value="Bacteria"/>
</dbReference>
<dbReference type="HOGENOM" id="CLU_060196_1_0_9"/>
<dbReference type="UniPathway" id="UPA00863"/>
<dbReference type="Proteomes" id="UP000001968">
    <property type="component" value="Chromosome"/>
</dbReference>
<dbReference type="GO" id="GO:0005737">
    <property type="term" value="C:cytoplasm"/>
    <property type="evidence" value="ECO:0007669"/>
    <property type="project" value="UniProtKB-SubCell"/>
</dbReference>
<dbReference type="GO" id="GO:0009055">
    <property type="term" value="F:electron transfer activity"/>
    <property type="evidence" value="ECO:0007669"/>
    <property type="project" value="InterPro"/>
</dbReference>
<dbReference type="GO" id="GO:0000166">
    <property type="term" value="F:nucleotide binding"/>
    <property type="evidence" value="ECO:0007669"/>
    <property type="project" value="UniProtKB-KW"/>
</dbReference>
<dbReference type="GO" id="GO:0019605">
    <property type="term" value="P:butyrate metabolic process"/>
    <property type="evidence" value="ECO:0007669"/>
    <property type="project" value="UniProtKB-UniPathway"/>
</dbReference>
<dbReference type="CDD" id="cd01714">
    <property type="entry name" value="ETF_beta"/>
    <property type="match status" value="1"/>
</dbReference>
<dbReference type="Gene3D" id="3.40.50.620">
    <property type="entry name" value="HUPs"/>
    <property type="match status" value="1"/>
</dbReference>
<dbReference type="InterPro" id="IPR014730">
    <property type="entry name" value="ETF_a/b_N"/>
</dbReference>
<dbReference type="InterPro" id="IPR012255">
    <property type="entry name" value="ETF_b"/>
</dbReference>
<dbReference type="InterPro" id="IPR033948">
    <property type="entry name" value="ETF_beta_N"/>
</dbReference>
<dbReference type="InterPro" id="IPR014729">
    <property type="entry name" value="Rossmann-like_a/b/a_fold"/>
</dbReference>
<dbReference type="PANTHER" id="PTHR21294">
    <property type="entry name" value="ELECTRON TRANSFER FLAVOPROTEIN BETA-SUBUNIT"/>
    <property type="match status" value="1"/>
</dbReference>
<dbReference type="PANTHER" id="PTHR21294:SF8">
    <property type="entry name" value="ELECTRON TRANSFER FLAVOPROTEIN SUBUNIT BETA"/>
    <property type="match status" value="1"/>
</dbReference>
<dbReference type="Pfam" id="PF01012">
    <property type="entry name" value="ETF"/>
    <property type="match status" value="1"/>
</dbReference>
<dbReference type="PIRSF" id="PIRSF000090">
    <property type="entry name" value="Beta-ETF"/>
    <property type="match status" value="1"/>
</dbReference>
<dbReference type="SMART" id="SM00893">
    <property type="entry name" value="ETF"/>
    <property type="match status" value="1"/>
</dbReference>
<dbReference type="SUPFAM" id="SSF52402">
    <property type="entry name" value="Adenine nucleotide alpha hydrolases-like"/>
    <property type="match status" value="1"/>
</dbReference>
<protein>
    <recommendedName>
        <fullName evidence="4">Electron transfer flavoprotein subunit beta</fullName>
    </recommendedName>
</protein>
<keyword id="KW-0963">Cytoplasm</keyword>
<keyword id="KW-0249">Electron transport</keyword>
<keyword id="KW-0276">Fatty acid metabolism</keyword>
<keyword id="KW-0443">Lipid metabolism</keyword>
<keyword id="KW-0547">Nucleotide-binding</keyword>
<keyword id="KW-1185">Reference proteome</keyword>
<keyword id="KW-0813">Transport</keyword>
<proteinExistence type="evidence at protein level"/>
<comment type="function">
    <text evidence="6 7">Part of an electron transfer flavoprotein involved in syntrophic growth of S.wolfei with butyrate. Probably receives electrons from butyryl-CoA dehydrogenases, and transfers them to the membrane-bound quinone oxidoreductase Swol_0698.</text>
</comment>
<comment type="cofactor">
    <cofactor evidence="1">
        <name>AMP</name>
        <dbReference type="ChEBI" id="CHEBI:456215"/>
    </cofactor>
    <text evidence="1">Binds 1 AMP per subunit.</text>
</comment>
<comment type="pathway">
    <text evidence="6 7">Lipid metabolism; butanoate metabolism.</text>
</comment>
<comment type="subunit">
    <text evidence="1">Heterodimer of an alpha and a beta subunit.</text>
</comment>
<comment type="subcellular location">
    <subcellularLocation>
        <location evidence="3">Cytoplasm</location>
    </subcellularLocation>
</comment>
<comment type="induction">
    <text evidence="2 3">Highly expressed during syntrophic growth with butyrate (at protein level) (PubMed:19648244, PubMed:23468890). Seems to be constitutively expressed (PubMed:23468890).</text>
</comment>
<comment type="similarity">
    <text evidence="5">Belongs to the ETF beta-subunit/FixA family.</text>
</comment>
<evidence type="ECO:0000250" key="1">
    <source>
        <dbReference type="UniProtKB" id="P13804"/>
    </source>
</evidence>
<evidence type="ECO:0000269" key="2">
    <source>
    </source>
</evidence>
<evidence type="ECO:0000269" key="3">
    <source>
    </source>
</evidence>
<evidence type="ECO:0000303" key="4">
    <source>
    </source>
</evidence>
<evidence type="ECO:0000305" key="5"/>
<evidence type="ECO:0000305" key="6">
    <source>
    </source>
</evidence>
<evidence type="ECO:0000305" key="7">
    <source>
    </source>
</evidence>
<evidence type="ECO:0000312" key="8">
    <source>
        <dbReference type="EMBL" id="ABI68020.1"/>
    </source>
</evidence>
<name>ETFB_SYNWW</name>
<accession>Q0AZ34</accession>
<reference key="1">
    <citation type="journal article" date="2010" name="Environ. Microbiol.">
        <title>The genome of Syntrophomonas wolfei: new insights into syntrophic metabolism and biohydrogen production.</title>
        <authorList>
            <person name="Sieber J.R."/>
            <person name="Sims D.R."/>
            <person name="Han C."/>
            <person name="Kim E."/>
            <person name="Lykidis A."/>
            <person name="Lapidus A.L."/>
            <person name="McDonnald E."/>
            <person name="Rohlin L."/>
            <person name="Culley D.E."/>
            <person name="Gunsalus R."/>
            <person name="McInerney M.J."/>
        </authorList>
    </citation>
    <scope>NUCLEOTIDE SEQUENCE [LARGE SCALE GENOMIC DNA]</scope>
    <source>
        <strain>DSM 2245B / Goettingen</strain>
    </source>
</reference>
<reference key="2">
    <citation type="journal article" date="2009" name="J. Bacteriol.">
        <title>Involvement of NADH:acceptor oxidoreductase and butyryl coenzyme A dehydrogenase in reversed electron transport during syntrophic butyrate oxidation by Syntrophomonas wolfei.</title>
        <authorList>
            <person name="Mueller N."/>
            <person name="Schleheck D."/>
            <person name="Schink B."/>
        </authorList>
    </citation>
    <scope>IDENTIFICATION BY MASS SPECTROMETRY</scope>
    <scope>FUNCTION</scope>
    <scope>INDUCTION</scope>
    <scope>PATHWAY</scope>
</reference>
<reference key="3">
    <citation type="journal article" date="2013" name="PLoS ONE">
        <title>A proteomic view at the biochemistry of syntrophic butyrate oxidation in Syntrophomonas wolfei.</title>
        <authorList>
            <person name="Schmidt A."/>
            <person name="Mueller N."/>
            <person name="Schink B."/>
            <person name="Schleheck D."/>
        </authorList>
    </citation>
    <scope>IDENTIFICATION BY MASS SPECTROMETRY</scope>
    <scope>INDUCTION</scope>
    <scope>SUBCELLULAR LOCATION</scope>
    <scope>FUNCTION</scope>
    <scope>PATHWAY</scope>
</reference>
<feature type="chain" id="PRO_0000442218" description="Electron transfer flavoprotein subunit beta">
    <location>
        <begin position="1"/>
        <end position="252"/>
    </location>
</feature>
<gene>
    <name evidence="4" type="primary">etfB</name>
    <name evidence="8" type="ordered locus">Swol_0696</name>
</gene>
<sequence>MNLKVLVCVKQTFDTEAKIELKDGKIADAGINLIINPYDEVAVEGAIQLKEKGVAKEIVVVAAGSDKAMDAIRTALAMGADRGILVQQDTAADEFARAVALAEAIKGENPDIILAGHVAADDGSSQVPTRVAEILGLPHVNVITAVEIAGGKATCTSEADGGTQVTEVSLPAVISSQVSWNEPRYPSMKGIMAAKKKPVATAAAAAAESKVKILEFSLPPAKAAGIKIEDEPEVCATKLAEWMKNTVKVEVK</sequence>